<organism>
    <name type="scientific">Acinetobacter baumannii (strain ATCC 17978 / DSM 105126 / CIP 53.77 / LMG 1025 / NCDC KC755 / 5377)</name>
    <dbReference type="NCBI Taxonomy" id="400667"/>
    <lineage>
        <taxon>Bacteria</taxon>
        <taxon>Pseudomonadati</taxon>
        <taxon>Pseudomonadota</taxon>
        <taxon>Gammaproteobacteria</taxon>
        <taxon>Moraxellales</taxon>
        <taxon>Moraxellaceae</taxon>
        <taxon>Acinetobacter</taxon>
        <taxon>Acinetobacter calcoaceticus/baumannii complex</taxon>
    </lineage>
</organism>
<name>RSMC_ACIBT</name>
<gene>
    <name evidence="1" type="primary">rsmC</name>
    <name type="ordered locus">A1S_2837</name>
</gene>
<feature type="chain" id="PRO_0000369677" description="Ribosomal RNA small subunit methyltransferase C">
    <location>
        <begin position="1"/>
        <end position="337"/>
    </location>
</feature>
<sequence length="337" mass="37512">MDPRSEVILRQQDYLKGRVLLINAPNDALVSQLPTEIDASVWTWNYADYQGFLNAGATAHFSVEFPLQEFDQAIIFVPKSKELLNYILHVVMSHLKIDQSVFLVGEKKGGVERAAKQLQSFGKILKLDSARHCQLWHLKIEKTEKIKPLESWLKTYTVQVNEQELTICALPGVFSQTHLDVGTAVLLPYLNQVKSGRIADFGCGAGIISCYLAKANSSNIIHALDIDAFALQSTEMTFSRNGIGSDQLRLQPVTGIADAPTELDAIVSNPPFHQGIHTNYDASEGLCQNAKKHLKASGELWIVANRFLNYPILIEKHFGQCEIKTDLQGFKVLYACA</sequence>
<evidence type="ECO:0000255" key="1">
    <source>
        <dbReference type="HAMAP-Rule" id="MF_01862"/>
    </source>
</evidence>
<comment type="function">
    <text evidence="1">Specifically methylates the guanine in position 1207 of 16S rRNA in the 30S particle.</text>
</comment>
<comment type="catalytic activity">
    <reaction evidence="1">
        <text>guanosine(1207) in 16S rRNA + S-adenosyl-L-methionine = N(2)-methylguanosine(1207) in 16S rRNA + S-adenosyl-L-homocysteine + H(+)</text>
        <dbReference type="Rhea" id="RHEA:42736"/>
        <dbReference type="Rhea" id="RHEA-COMP:10213"/>
        <dbReference type="Rhea" id="RHEA-COMP:10214"/>
        <dbReference type="ChEBI" id="CHEBI:15378"/>
        <dbReference type="ChEBI" id="CHEBI:57856"/>
        <dbReference type="ChEBI" id="CHEBI:59789"/>
        <dbReference type="ChEBI" id="CHEBI:74269"/>
        <dbReference type="ChEBI" id="CHEBI:74481"/>
        <dbReference type="EC" id="2.1.1.172"/>
    </reaction>
</comment>
<comment type="subunit">
    <text evidence="1">Monomer.</text>
</comment>
<comment type="subcellular location">
    <subcellularLocation>
        <location evidence="1">Cytoplasm</location>
    </subcellularLocation>
</comment>
<comment type="similarity">
    <text evidence="1">Belongs to the methyltransferase superfamily. RsmC family.</text>
</comment>
<reference key="1">
    <citation type="journal article" date="2007" name="Genes Dev.">
        <title>New insights into Acinetobacter baumannii pathogenesis revealed by high-density pyrosequencing and transposon mutagenesis.</title>
        <authorList>
            <person name="Smith M.G."/>
            <person name="Gianoulis T.A."/>
            <person name="Pukatzki S."/>
            <person name="Mekalanos J.J."/>
            <person name="Ornston L.N."/>
            <person name="Gerstein M."/>
            <person name="Snyder M."/>
        </authorList>
    </citation>
    <scope>NUCLEOTIDE SEQUENCE [LARGE SCALE GENOMIC DNA]</scope>
    <source>
        <strain>ATCC 17978 / DSM 105126 / CIP 53.77 / LMG 1025 / NCDC KC755 / 5377</strain>
    </source>
</reference>
<proteinExistence type="inferred from homology"/>
<accession>A3M8J9</accession>
<keyword id="KW-0963">Cytoplasm</keyword>
<keyword id="KW-0489">Methyltransferase</keyword>
<keyword id="KW-0698">rRNA processing</keyword>
<keyword id="KW-0949">S-adenosyl-L-methionine</keyword>
<keyword id="KW-0808">Transferase</keyword>
<protein>
    <recommendedName>
        <fullName evidence="1">Ribosomal RNA small subunit methyltransferase C</fullName>
        <ecNumber evidence="1">2.1.1.172</ecNumber>
    </recommendedName>
    <alternativeName>
        <fullName evidence="1">16S rRNA m2G1207 methyltransferase</fullName>
    </alternativeName>
    <alternativeName>
        <fullName evidence="1">rRNA (guanine-N(2)-)-methyltransferase RsmC</fullName>
    </alternativeName>
</protein>
<dbReference type="EC" id="2.1.1.172" evidence="1"/>
<dbReference type="EMBL" id="CP000521">
    <property type="protein sequence ID" value="ABO13243.2"/>
    <property type="molecule type" value="Genomic_DNA"/>
</dbReference>
<dbReference type="RefSeq" id="WP_000371521.1">
    <property type="nucleotide sequence ID" value="NZ_CACVBA010000001.1"/>
</dbReference>
<dbReference type="SMR" id="A3M8J9"/>
<dbReference type="KEGG" id="acb:A1S_2837"/>
<dbReference type="HOGENOM" id="CLU_049581_0_0_6"/>
<dbReference type="GO" id="GO:0005737">
    <property type="term" value="C:cytoplasm"/>
    <property type="evidence" value="ECO:0007669"/>
    <property type="project" value="UniProtKB-SubCell"/>
</dbReference>
<dbReference type="GO" id="GO:0052914">
    <property type="term" value="F:16S rRNA (guanine(1207)-N(2))-methyltransferase activity"/>
    <property type="evidence" value="ECO:0007669"/>
    <property type="project" value="UniProtKB-EC"/>
</dbReference>
<dbReference type="GO" id="GO:0003676">
    <property type="term" value="F:nucleic acid binding"/>
    <property type="evidence" value="ECO:0007669"/>
    <property type="project" value="InterPro"/>
</dbReference>
<dbReference type="CDD" id="cd02440">
    <property type="entry name" value="AdoMet_MTases"/>
    <property type="match status" value="1"/>
</dbReference>
<dbReference type="Gene3D" id="3.40.50.150">
    <property type="entry name" value="Vaccinia Virus protein VP39"/>
    <property type="match status" value="2"/>
</dbReference>
<dbReference type="HAMAP" id="MF_01862">
    <property type="entry name" value="16SrRNA_methyltr_C"/>
    <property type="match status" value="1"/>
</dbReference>
<dbReference type="InterPro" id="IPR002052">
    <property type="entry name" value="DNA_methylase_N6_adenine_CS"/>
</dbReference>
<dbReference type="InterPro" id="IPR013675">
    <property type="entry name" value="Mtase_sm_N"/>
</dbReference>
<dbReference type="InterPro" id="IPR023543">
    <property type="entry name" value="rRNA_ssu_MeTfrase_C"/>
</dbReference>
<dbReference type="InterPro" id="IPR046977">
    <property type="entry name" value="RsmC/RlmG"/>
</dbReference>
<dbReference type="InterPro" id="IPR029063">
    <property type="entry name" value="SAM-dependent_MTases_sf"/>
</dbReference>
<dbReference type="InterPro" id="IPR007848">
    <property type="entry name" value="Small_mtfrase_dom"/>
</dbReference>
<dbReference type="PANTHER" id="PTHR47816">
    <property type="entry name" value="RIBOSOMAL RNA SMALL SUBUNIT METHYLTRANSFERASE C"/>
    <property type="match status" value="1"/>
</dbReference>
<dbReference type="PANTHER" id="PTHR47816:SF4">
    <property type="entry name" value="RIBOSOMAL RNA SMALL SUBUNIT METHYLTRANSFERASE C"/>
    <property type="match status" value="1"/>
</dbReference>
<dbReference type="Pfam" id="PF05175">
    <property type="entry name" value="MTS"/>
    <property type="match status" value="1"/>
</dbReference>
<dbReference type="Pfam" id="PF08468">
    <property type="entry name" value="MTS_N"/>
    <property type="match status" value="1"/>
</dbReference>
<dbReference type="SUPFAM" id="SSF53335">
    <property type="entry name" value="S-adenosyl-L-methionine-dependent methyltransferases"/>
    <property type="match status" value="1"/>
</dbReference>